<keyword id="KW-0028">Amino-acid biosynthesis</keyword>
<keyword id="KW-0055">Arginine biosynthesis</keyword>
<keyword id="KW-0963">Cytoplasm</keyword>
<keyword id="KW-0456">Lyase</keyword>
<keyword id="KW-1185">Reference proteome</keyword>
<organism>
    <name type="scientific">Desulfitobacterium hafniense (strain Y51)</name>
    <dbReference type="NCBI Taxonomy" id="138119"/>
    <lineage>
        <taxon>Bacteria</taxon>
        <taxon>Bacillati</taxon>
        <taxon>Bacillota</taxon>
        <taxon>Clostridia</taxon>
        <taxon>Eubacteriales</taxon>
        <taxon>Desulfitobacteriaceae</taxon>
        <taxon>Desulfitobacterium</taxon>
    </lineage>
</organism>
<name>ARLY_DESHY</name>
<feature type="chain" id="PRO_1000000475" description="Argininosuccinate lyase">
    <location>
        <begin position="1"/>
        <end position="461"/>
    </location>
</feature>
<reference key="1">
    <citation type="journal article" date="2006" name="J. Bacteriol.">
        <title>Complete genome sequence of the dehalorespiring bacterium Desulfitobacterium hafniense Y51 and comparison with Dehalococcoides ethenogenes 195.</title>
        <authorList>
            <person name="Nonaka H."/>
            <person name="Keresztes G."/>
            <person name="Shinoda Y."/>
            <person name="Ikenaga Y."/>
            <person name="Abe M."/>
            <person name="Naito K."/>
            <person name="Inatomi K."/>
            <person name="Furukawa K."/>
            <person name="Inui M."/>
            <person name="Yukawa H."/>
        </authorList>
    </citation>
    <scope>NUCLEOTIDE SEQUENCE [LARGE SCALE GENOMIC DNA]</scope>
    <source>
        <strain>Y51</strain>
    </source>
</reference>
<sequence>MKLWGGRFEKSTDALVEDFHSSISFDQRLYKQDIQGSIAHARMLGEIGVLTSAEAQQIIEGLKGILTDIREGKIQFEIGAEDIHMNVEKLLTERVGTVGKKVHTGRSRNDQVALDLRLFLREEIDHTQELLIALLRTVLDLAKEHQETYMPGYTHLQKAQPISFAHHMMAYAQMFLRDLGRLKDTRQRLNVSPLGSGALAGTTFPLEREMVAQELGFDGITWNSLDGVSDRDFALEFLSAASILMMHLSRLCEELVLWSTGEFQFVIMDDGYSTGSSIMPQKKNPDVAELVRGKTGRVYGDLVALLTVMKGLPLAYNKDMQEDKEQVFDAVDTIQKSLLVVEPMLRTMKVNKKAMAEGAKGGFTNATDLADYLAKKNVPFREAHEIVGKLVLYCSKRGCGLEDLTLKEFQEHSDVFAEDLFESIGIEYCVRQRHIPGGPSPESVAQAILWTEHILEQFTGG</sequence>
<dbReference type="EC" id="4.3.2.1" evidence="1"/>
<dbReference type="EMBL" id="AP008230">
    <property type="protein sequence ID" value="BAE82575.1"/>
    <property type="molecule type" value="Genomic_DNA"/>
</dbReference>
<dbReference type="RefSeq" id="WP_005808617.1">
    <property type="nucleotide sequence ID" value="NC_007907.1"/>
</dbReference>
<dbReference type="SMR" id="Q24ZG7"/>
<dbReference type="STRING" id="138119.DSY0786"/>
<dbReference type="KEGG" id="dsy:DSY0786"/>
<dbReference type="eggNOG" id="COG0165">
    <property type="taxonomic scope" value="Bacteria"/>
</dbReference>
<dbReference type="HOGENOM" id="CLU_027272_2_3_9"/>
<dbReference type="UniPathway" id="UPA00068">
    <property type="reaction ID" value="UER00114"/>
</dbReference>
<dbReference type="Proteomes" id="UP000001946">
    <property type="component" value="Chromosome"/>
</dbReference>
<dbReference type="GO" id="GO:0005829">
    <property type="term" value="C:cytosol"/>
    <property type="evidence" value="ECO:0007669"/>
    <property type="project" value="TreeGrafter"/>
</dbReference>
<dbReference type="GO" id="GO:0004056">
    <property type="term" value="F:argininosuccinate lyase activity"/>
    <property type="evidence" value="ECO:0007669"/>
    <property type="project" value="UniProtKB-UniRule"/>
</dbReference>
<dbReference type="GO" id="GO:0042450">
    <property type="term" value="P:arginine biosynthetic process via ornithine"/>
    <property type="evidence" value="ECO:0007669"/>
    <property type="project" value="InterPro"/>
</dbReference>
<dbReference type="GO" id="GO:0006526">
    <property type="term" value="P:L-arginine biosynthetic process"/>
    <property type="evidence" value="ECO:0007669"/>
    <property type="project" value="UniProtKB-UniRule"/>
</dbReference>
<dbReference type="CDD" id="cd01359">
    <property type="entry name" value="Argininosuccinate_lyase"/>
    <property type="match status" value="1"/>
</dbReference>
<dbReference type="FunFam" id="1.10.275.10:FF:000002">
    <property type="entry name" value="Argininosuccinate lyase"/>
    <property type="match status" value="1"/>
</dbReference>
<dbReference type="FunFam" id="1.10.40.30:FF:000001">
    <property type="entry name" value="Argininosuccinate lyase"/>
    <property type="match status" value="1"/>
</dbReference>
<dbReference type="FunFam" id="1.20.200.10:FF:000002">
    <property type="entry name" value="Argininosuccinate lyase"/>
    <property type="match status" value="1"/>
</dbReference>
<dbReference type="Gene3D" id="1.10.40.30">
    <property type="entry name" value="Fumarase/aspartase (C-terminal domain)"/>
    <property type="match status" value="1"/>
</dbReference>
<dbReference type="Gene3D" id="1.20.200.10">
    <property type="entry name" value="Fumarase/aspartase (Central domain)"/>
    <property type="match status" value="1"/>
</dbReference>
<dbReference type="Gene3D" id="1.10.275.10">
    <property type="entry name" value="Fumarase/aspartase (N-terminal domain)"/>
    <property type="match status" value="1"/>
</dbReference>
<dbReference type="HAMAP" id="MF_00006">
    <property type="entry name" value="Arg_succ_lyase"/>
    <property type="match status" value="1"/>
</dbReference>
<dbReference type="InterPro" id="IPR029419">
    <property type="entry name" value="Arg_succ_lyase_C"/>
</dbReference>
<dbReference type="InterPro" id="IPR009049">
    <property type="entry name" value="Argininosuccinate_lyase"/>
</dbReference>
<dbReference type="InterPro" id="IPR024083">
    <property type="entry name" value="Fumarase/histidase_N"/>
</dbReference>
<dbReference type="InterPro" id="IPR020557">
    <property type="entry name" value="Fumarate_lyase_CS"/>
</dbReference>
<dbReference type="InterPro" id="IPR000362">
    <property type="entry name" value="Fumarate_lyase_fam"/>
</dbReference>
<dbReference type="InterPro" id="IPR022761">
    <property type="entry name" value="Fumarate_lyase_N"/>
</dbReference>
<dbReference type="InterPro" id="IPR008948">
    <property type="entry name" value="L-Aspartase-like"/>
</dbReference>
<dbReference type="NCBIfam" id="TIGR00838">
    <property type="entry name" value="argH"/>
    <property type="match status" value="1"/>
</dbReference>
<dbReference type="PANTHER" id="PTHR43814">
    <property type="entry name" value="ARGININOSUCCINATE LYASE"/>
    <property type="match status" value="1"/>
</dbReference>
<dbReference type="PANTHER" id="PTHR43814:SF1">
    <property type="entry name" value="ARGININOSUCCINATE LYASE"/>
    <property type="match status" value="1"/>
</dbReference>
<dbReference type="Pfam" id="PF14698">
    <property type="entry name" value="ASL_C2"/>
    <property type="match status" value="1"/>
</dbReference>
<dbReference type="Pfam" id="PF00206">
    <property type="entry name" value="Lyase_1"/>
    <property type="match status" value="1"/>
</dbReference>
<dbReference type="PRINTS" id="PR00145">
    <property type="entry name" value="ARGSUCLYASE"/>
</dbReference>
<dbReference type="PRINTS" id="PR00149">
    <property type="entry name" value="FUMRATELYASE"/>
</dbReference>
<dbReference type="SUPFAM" id="SSF48557">
    <property type="entry name" value="L-aspartase-like"/>
    <property type="match status" value="1"/>
</dbReference>
<dbReference type="PROSITE" id="PS00163">
    <property type="entry name" value="FUMARATE_LYASES"/>
    <property type="match status" value="1"/>
</dbReference>
<protein>
    <recommendedName>
        <fullName evidence="1">Argininosuccinate lyase</fullName>
        <shortName evidence="1">ASAL</shortName>
        <ecNumber evidence="1">4.3.2.1</ecNumber>
    </recommendedName>
    <alternativeName>
        <fullName evidence="1">Arginosuccinase</fullName>
    </alternativeName>
</protein>
<proteinExistence type="inferred from homology"/>
<comment type="catalytic activity">
    <reaction evidence="1">
        <text>2-(N(omega)-L-arginino)succinate = fumarate + L-arginine</text>
        <dbReference type="Rhea" id="RHEA:24020"/>
        <dbReference type="ChEBI" id="CHEBI:29806"/>
        <dbReference type="ChEBI" id="CHEBI:32682"/>
        <dbReference type="ChEBI" id="CHEBI:57472"/>
        <dbReference type="EC" id="4.3.2.1"/>
    </reaction>
</comment>
<comment type="pathway">
    <text evidence="1">Amino-acid biosynthesis; L-arginine biosynthesis; L-arginine from L-ornithine and carbamoyl phosphate: step 3/3.</text>
</comment>
<comment type="subcellular location">
    <subcellularLocation>
        <location evidence="1">Cytoplasm</location>
    </subcellularLocation>
</comment>
<comment type="similarity">
    <text evidence="1">Belongs to the lyase 1 family. Argininosuccinate lyase subfamily.</text>
</comment>
<accession>Q24ZG7</accession>
<evidence type="ECO:0000255" key="1">
    <source>
        <dbReference type="HAMAP-Rule" id="MF_00006"/>
    </source>
</evidence>
<gene>
    <name evidence="1" type="primary">argH</name>
    <name type="ordered locus">DSY0786</name>
</gene>